<keyword id="KW-0007">Acetylation</keyword>
<keyword id="KW-0010">Activator</keyword>
<keyword id="KW-1017">Isopeptide bond</keyword>
<keyword id="KW-0597">Phosphoprotein</keyword>
<keyword id="KW-1185">Reference proteome</keyword>
<keyword id="KW-0804">Transcription</keyword>
<keyword id="KW-0805">Transcription regulation</keyword>
<keyword id="KW-0810">Translation regulation</keyword>
<keyword id="KW-0832">Ubl conjugation</keyword>
<evidence type="ECO:0000250" key="1">
    <source>
        <dbReference type="UniProtKB" id="Q7L1Q6"/>
    </source>
</evidence>
<evidence type="ECO:0000255" key="2">
    <source>
        <dbReference type="PROSITE-ProRule" id="PRU00695"/>
    </source>
</evidence>
<evidence type="ECO:0000256" key="3">
    <source>
        <dbReference type="SAM" id="MobiDB-lite"/>
    </source>
</evidence>
<evidence type="ECO:0000305" key="4"/>
<evidence type="ECO:0007744" key="5">
    <source>
    </source>
</evidence>
<name>5MP2_RAT</name>
<gene>
    <name type="primary">Bzw1</name>
    <name evidence="1" type="synonym">5mp2</name>
</gene>
<comment type="function">
    <text evidence="1">Translation initiation regulator which represses repeat-associated non-AUG (RAN) initiated translation probably by acting as a competitive inhibitor of eukaryotic translation initiation factor 5 (EIF5) function (By similarity). Enhances histone H4 gene transcription but does not seem to bind DNA directly (By similarity).</text>
</comment>
<comment type="similarity">
    <text evidence="4">Belongs to the BZW family.</text>
</comment>
<feature type="chain" id="PRO_0000254612" description="eIF5-mimic protein 2">
    <location>
        <begin position="1"/>
        <end position="419"/>
    </location>
</feature>
<feature type="domain" description="W2" evidence="2">
    <location>
        <begin position="247"/>
        <end position="414"/>
    </location>
</feature>
<feature type="region of interest" description="Disordered" evidence="3">
    <location>
        <begin position="1"/>
        <end position="26"/>
    </location>
</feature>
<feature type="compositionally biased region" description="Polar residues" evidence="3">
    <location>
        <begin position="1"/>
        <end position="15"/>
    </location>
</feature>
<feature type="modified residue" description="N-acetylmethionine" evidence="1">
    <location>
        <position position="1"/>
    </location>
</feature>
<feature type="modified residue" description="Phosphoserine" evidence="1">
    <location>
        <position position="12"/>
    </location>
</feature>
<feature type="modified residue" description="Phosphoserine" evidence="5">
    <location>
        <position position="411"/>
    </location>
</feature>
<feature type="modified residue" description="Phosphoserine" evidence="5">
    <location>
        <position position="413"/>
    </location>
</feature>
<feature type="cross-link" description="Glycyl lysine isopeptide (Lys-Gly) (interchain with G-Cter in SUMO2)" evidence="1">
    <location>
        <position position="368"/>
    </location>
</feature>
<reference key="1">
    <citation type="journal article" date="2004" name="Genome Res.">
        <title>The status, quality, and expansion of the NIH full-length cDNA project: the Mammalian Gene Collection (MGC).</title>
        <authorList>
            <consortium name="The MGC Project Team"/>
        </authorList>
    </citation>
    <scope>NUCLEOTIDE SEQUENCE [LARGE SCALE MRNA]</scope>
    <source>
        <tissue>Pituitary</tissue>
    </source>
</reference>
<reference key="2">
    <citation type="journal article" date="2012" name="Nat. Commun.">
        <title>Quantitative maps of protein phosphorylation sites across 14 different rat organs and tissues.</title>
        <authorList>
            <person name="Lundby A."/>
            <person name="Secher A."/>
            <person name="Lage K."/>
            <person name="Nordsborg N.B."/>
            <person name="Dmytriyev A."/>
            <person name="Lundby C."/>
            <person name="Olsen J.V."/>
        </authorList>
    </citation>
    <scope>PHOSPHORYLATION [LARGE SCALE ANALYSIS] AT SER-411 AND SER-413</scope>
    <scope>IDENTIFICATION BY MASS SPECTROMETRY [LARGE SCALE ANALYSIS]</scope>
</reference>
<proteinExistence type="evidence at protein level"/>
<organism>
    <name type="scientific">Rattus norvegicus</name>
    <name type="common">Rat</name>
    <dbReference type="NCBI Taxonomy" id="10116"/>
    <lineage>
        <taxon>Eukaryota</taxon>
        <taxon>Metazoa</taxon>
        <taxon>Chordata</taxon>
        <taxon>Craniata</taxon>
        <taxon>Vertebrata</taxon>
        <taxon>Euteleostomi</taxon>
        <taxon>Mammalia</taxon>
        <taxon>Eutheria</taxon>
        <taxon>Euarchontoglires</taxon>
        <taxon>Glires</taxon>
        <taxon>Rodentia</taxon>
        <taxon>Myomorpha</taxon>
        <taxon>Muroidea</taxon>
        <taxon>Muridae</taxon>
        <taxon>Murinae</taxon>
        <taxon>Rattus</taxon>
    </lineage>
</organism>
<sequence length="419" mass="48043">MNNQKQQKPTLSGQRFKTRKRDEKERFDPTQFQDCIIQGLTETGTDLEAVAKFLDASGAKLDYRRYAETLFDILVAGGMLAPGGTLADDMMRTDVCVFAAQEDLETMQAFAQVFNKLIRRYKYLEKGFEDEVKKLLLFLKGFSESERNKLAMLTGVLLANGTLNASILNSLYNENLVKEGVSAAFAVKLFKSWINEKDINAVAASLRKVSMDNRLMELFPANKQSVEHFTKYFTEAGLKELSEYVRNQQTIGARKELQKELQEQMSRGDPFKDIILYVKEEMKKNNIPEPVVIGIVWSSVMSTVEWNKKEELVAEQAIKHLKQYSPLLAAFTTQGQSELTLLLKIQEYCYDNIHFMKAFQKIVVLFYKAEVLSEEPILKWYKDAHVAKGKSVFLEQMKKFVEWLKNAEEESESEAEEGD</sequence>
<accession>Q6P7P5</accession>
<protein>
    <recommendedName>
        <fullName evidence="1">eIF5-mimic protein 2</fullName>
    </recommendedName>
    <alternativeName>
        <fullName>Basic leucine zipper and W2 domain-containing protein 1</fullName>
    </alternativeName>
</protein>
<dbReference type="EMBL" id="BC061580">
    <property type="protein sequence ID" value="AAH61580.1"/>
    <property type="molecule type" value="mRNA"/>
</dbReference>
<dbReference type="RefSeq" id="NP_942084.1">
    <property type="nucleotide sequence ID" value="NM_198789.2"/>
</dbReference>
<dbReference type="SMR" id="Q6P7P5"/>
<dbReference type="FunCoup" id="Q6P7P5">
    <property type="interactions" value="4184"/>
</dbReference>
<dbReference type="STRING" id="10116.ENSRNOP00000019486"/>
<dbReference type="iPTMnet" id="Q6P7P5"/>
<dbReference type="PhosphoSitePlus" id="Q6P7P5"/>
<dbReference type="jPOST" id="Q6P7P5"/>
<dbReference type="PaxDb" id="10116-ENSRNOP00000019486"/>
<dbReference type="Ensembl" id="ENSRNOT00000019486.5">
    <property type="protein sequence ID" value="ENSRNOP00000019486.4"/>
    <property type="gene ID" value="ENSRNOG00000013977.5"/>
</dbReference>
<dbReference type="GeneID" id="363232"/>
<dbReference type="KEGG" id="rno:363232"/>
<dbReference type="UCSC" id="RGD:735129">
    <property type="organism name" value="rat"/>
</dbReference>
<dbReference type="AGR" id="RGD:735129"/>
<dbReference type="CTD" id="9689"/>
<dbReference type="RGD" id="735129">
    <property type="gene designation" value="Bzw1"/>
</dbReference>
<dbReference type="eggNOG" id="KOG2297">
    <property type="taxonomic scope" value="Eukaryota"/>
</dbReference>
<dbReference type="GeneTree" id="ENSGT00390000012561"/>
<dbReference type="HOGENOM" id="CLU_032849_0_1_1"/>
<dbReference type="InParanoid" id="Q6P7P5"/>
<dbReference type="OrthoDB" id="1727522at2759"/>
<dbReference type="PhylomeDB" id="Q6P7P5"/>
<dbReference type="TreeFam" id="TF324313"/>
<dbReference type="PRO" id="PR:Q6P7P5"/>
<dbReference type="Proteomes" id="UP000002494">
    <property type="component" value="Chromosome 9"/>
</dbReference>
<dbReference type="Bgee" id="ENSRNOG00000013977">
    <property type="expression patterns" value="Expressed in quadriceps femoris and 19 other cell types or tissues"/>
</dbReference>
<dbReference type="GO" id="GO:0005737">
    <property type="term" value="C:cytoplasm"/>
    <property type="evidence" value="ECO:0000266"/>
    <property type="project" value="RGD"/>
</dbReference>
<dbReference type="GO" id="GO:0006446">
    <property type="term" value="P:regulation of translational initiation"/>
    <property type="evidence" value="ECO:0000250"/>
    <property type="project" value="UniProtKB"/>
</dbReference>
<dbReference type="CDD" id="cd11560">
    <property type="entry name" value="W2_eIF5C_like"/>
    <property type="match status" value="1"/>
</dbReference>
<dbReference type="FunFam" id="1.25.40.180:FF:000006">
    <property type="entry name" value="Basic leucine zipper and W2 domain-containing protein 1"/>
    <property type="match status" value="1"/>
</dbReference>
<dbReference type="Gene3D" id="1.25.40.180">
    <property type="match status" value="1"/>
</dbReference>
<dbReference type="InterPro" id="IPR016024">
    <property type="entry name" value="ARM-type_fold"/>
</dbReference>
<dbReference type="InterPro" id="IPR051245">
    <property type="entry name" value="eIF5-mimic_regulator"/>
</dbReference>
<dbReference type="InterPro" id="IPR043510">
    <property type="entry name" value="W2_BZW1/2"/>
</dbReference>
<dbReference type="InterPro" id="IPR003307">
    <property type="entry name" value="W2_domain"/>
</dbReference>
<dbReference type="PANTHER" id="PTHR14208">
    <property type="entry name" value="BASIC LEUCINE ZIPPER AND W2 DOMAIN-CONTAINING PROTEIN"/>
    <property type="match status" value="1"/>
</dbReference>
<dbReference type="PANTHER" id="PTHR14208:SF0">
    <property type="entry name" value="EIF5-MIMIC PROTEIN 2"/>
    <property type="match status" value="1"/>
</dbReference>
<dbReference type="Pfam" id="PF25504">
    <property type="entry name" value="HEAT_5MP1_2"/>
    <property type="match status" value="1"/>
</dbReference>
<dbReference type="Pfam" id="PF02020">
    <property type="entry name" value="W2"/>
    <property type="match status" value="1"/>
</dbReference>
<dbReference type="SMART" id="SM00515">
    <property type="entry name" value="eIF5C"/>
    <property type="match status" value="1"/>
</dbReference>
<dbReference type="SUPFAM" id="SSF48371">
    <property type="entry name" value="ARM repeat"/>
    <property type="match status" value="1"/>
</dbReference>
<dbReference type="PROSITE" id="PS51363">
    <property type="entry name" value="W2"/>
    <property type="match status" value="1"/>
</dbReference>